<proteinExistence type="inferred from homology"/>
<name>RIMK_PSE14</name>
<organism>
    <name type="scientific">Pseudomonas savastanoi pv. phaseolicola (strain 1448A / Race 6)</name>
    <name type="common">Pseudomonas syringae pv. phaseolicola (strain 1448A / Race 6)</name>
    <dbReference type="NCBI Taxonomy" id="264730"/>
    <lineage>
        <taxon>Bacteria</taxon>
        <taxon>Pseudomonadati</taxon>
        <taxon>Pseudomonadota</taxon>
        <taxon>Gammaproteobacteria</taxon>
        <taxon>Pseudomonadales</taxon>
        <taxon>Pseudomonadaceae</taxon>
        <taxon>Pseudomonas</taxon>
    </lineage>
</organism>
<gene>
    <name evidence="1" type="primary">rimK</name>
    <name type="ordered locus">PSPPH_5017</name>
</gene>
<comment type="cofactor">
    <cofactor evidence="1">
        <name>Mg(2+)</name>
        <dbReference type="ChEBI" id="CHEBI:18420"/>
    </cofactor>
    <cofactor evidence="1">
        <name>Mn(2+)</name>
        <dbReference type="ChEBI" id="CHEBI:29035"/>
    </cofactor>
    <text evidence="1">Binds 2 magnesium or manganese ions per subunit.</text>
</comment>
<comment type="similarity">
    <text evidence="1">Belongs to the RimK family.</text>
</comment>
<evidence type="ECO:0000255" key="1">
    <source>
        <dbReference type="HAMAP-Rule" id="MF_01552"/>
    </source>
</evidence>
<reference key="1">
    <citation type="journal article" date="2005" name="J. Bacteriol.">
        <title>Whole-genome sequence analysis of Pseudomonas syringae pv. phaseolicola 1448A reveals divergence among pathovars in genes involved in virulence and transposition.</title>
        <authorList>
            <person name="Joardar V."/>
            <person name="Lindeberg M."/>
            <person name="Jackson R.W."/>
            <person name="Selengut J."/>
            <person name="Dodson R."/>
            <person name="Brinkac L.M."/>
            <person name="Daugherty S.C."/>
            <person name="DeBoy R.T."/>
            <person name="Durkin A.S."/>
            <person name="Gwinn Giglio M."/>
            <person name="Madupu R."/>
            <person name="Nelson W.C."/>
            <person name="Rosovitz M.J."/>
            <person name="Sullivan S.A."/>
            <person name="Crabtree J."/>
            <person name="Creasy T."/>
            <person name="Davidsen T.M."/>
            <person name="Haft D.H."/>
            <person name="Zafar N."/>
            <person name="Zhou L."/>
            <person name="Halpin R."/>
            <person name="Holley T."/>
            <person name="Khouri H.M."/>
            <person name="Feldblyum T.V."/>
            <person name="White O."/>
            <person name="Fraser C.M."/>
            <person name="Chatterjee A.K."/>
            <person name="Cartinhour S."/>
            <person name="Schneider D."/>
            <person name="Mansfield J.W."/>
            <person name="Collmer A."/>
            <person name="Buell R."/>
        </authorList>
    </citation>
    <scope>NUCLEOTIDE SEQUENCE [LARGE SCALE GENOMIC DNA]</scope>
    <source>
        <strain>1448A / Race 6</strain>
    </source>
</reference>
<protein>
    <recommendedName>
        <fullName evidence="1">Probable alpha-L-glutamate ligase</fullName>
        <ecNumber evidence="1">6.3.2.-</ecNumber>
    </recommendedName>
</protein>
<dbReference type="EC" id="6.3.2.-" evidence="1"/>
<dbReference type="EMBL" id="CP000058">
    <property type="protein sequence ID" value="AAZ32986.1"/>
    <property type="molecule type" value="Genomic_DNA"/>
</dbReference>
<dbReference type="RefSeq" id="WP_003318100.1">
    <property type="nucleotide sequence ID" value="NC_005773.3"/>
</dbReference>
<dbReference type="SMR" id="Q48BZ2"/>
<dbReference type="GeneID" id="96216506"/>
<dbReference type="KEGG" id="psp:PSPPH_5017"/>
<dbReference type="eggNOG" id="COG0189">
    <property type="taxonomic scope" value="Bacteria"/>
</dbReference>
<dbReference type="HOGENOM" id="CLU_054353_0_1_6"/>
<dbReference type="Proteomes" id="UP000000551">
    <property type="component" value="Chromosome"/>
</dbReference>
<dbReference type="GO" id="GO:0005737">
    <property type="term" value="C:cytoplasm"/>
    <property type="evidence" value="ECO:0007669"/>
    <property type="project" value="TreeGrafter"/>
</dbReference>
<dbReference type="GO" id="GO:0005524">
    <property type="term" value="F:ATP binding"/>
    <property type="evidence" value="ECO:0007669"/>
    <property type="project" value="UniProtKB-UniRule"/>
</dbReference>
<dbReference type="GO" id="GO:0046872">
    <property type="term" value="F:metal ion binding"/>
    <property type="evidence" value="ECO:0007669"/>
    <property type="project" value="UniProtKB-KW"/>
</dbReference>
<dbReference type="GO" id="GO:0018169">
    <property type="term" value="F:ribosomal S6-glutamic acid ligase activity"/>
    <property type="evidence" value="ECO:0007669"/>
    <property type="project" value="TreeGrafter"/>
</dbReference>
<dbReference type="GO" id="GO:0036211">
    <property type="term" value="P:protein modification process"/>
    <property type="evidence" value="ECO:0007669"/>
    <property type="project" value="InterPro"/>
</dbReference>
<dbReference type="GO" id="GO:0009432">
    <property type="term" value="P:SOS response"/>
    <property type="evidence" value="ECO:0007669"/>
    <property type="project" value="TreeGrafter"/>
</dbReference>
<dbReference type="GO" id="GO:0006412">
    <property type="term" value="P:translation"/>
    <property type="evidence" value="ECO:0007669"/>
    <property type="project" value="UniProtKB-KW"/>
</dbReference>
<dbReference type="FunFam" id="3.40.50.20:FF:000004">
    <property type="entry name" value="Probable alpha-L-glutamate ligase"/>
    <property type="match status" value="1"/>
</dbReference>
<dbReference type="FunFam" id="3.30.1490.20:FF:000005">
    <property type="entry name" value="Probable alpha-L-glutamate ligase 1"/>
    <property type="match status" value="1"/>
</dbReference>
<dbReference type="FunFam" id="3.30.470.20:FF:000016">
    <property type="entry name" value="Ribosomal protein S6--L-glutamate ligase"/>
    <property type="match status" value="1"/>
</dbReference>
<dbReference type="Gene3D" id="3.40.50.20">
    <property type="match status" value="1"/>
</dbReference>
<dbReference type="Gene3D" id="3.30.1490.20">
    <property type="entry name" value="ATP-grasp fold, A domain"/>
    <property type="match status" value="1"/>
</dbReference>
<dbReference type="Gene3D" id="3.30.470.20">
    <property type="entry name" value="ATP-grasp fold, B domain"/>
    <property type="match status" value="1"/>
</dbReference>
<dbReference type="HAMAP" id="MF_01552">
    <property type="entry name" value="RimK"/>
    <property type="match status" value="1"/>
</dbReference>
<dbReference type="InterPro" id="IPR011761">
    <property type="entry name" value="ATP-grasp"/>
</dbReference>
<dbReference type="InterPro" id="IPR013651">
    <property type="entry name" value="ATP-grasp_RimK-type"/>
</dbReference>
<dbReference type="InterPro" id="IPR013815">
    <property type="entry name" value="ATP_grasp_subdomain_1"/>
</dbReference>
<dbReference type="InterPro" id="IPR023533">
    <property type="entry name" value="RimK"/>
</dbReference>
<dbReference type="InterPro" id="IPR041107">
    <property type="entry name" value="Rimk_N"/>
</dbReference>
<dbReference type="InterPro" id="IPR004666">
    <property type="entry name" value="Rp_bS6_RimK/Lys_biosynth_LsyX"/>
</dbReference>
<dbReference type="NCBIfam" id="NF007764">
    <property type="entry name" value="PRK10446.1"/>
    <property type="match status" value="1"/>
</dbReference>
<dbReference type="NCBIfam" id="TIGR00768">
    <property type="entry name" value="rimK_fam"/>
    <property type="match status" value="1"/>
</dbReference>
<dbReference type="PANTHER" id="PTHR21621:SF7">
    <property type="entry name" value="RIBOSOMAL PROTEIN BS6--L-GLUTAMATE LIGASE"/>
    <property type="match status" value="1"/>
</dbReference>
<dbReference type="PANTHER" id="PTHR21621">
    <property type="entry name" value="RIBOSOMAL PROTEIN S6 MODIFICATION PROTEIN"/>
    <property type="match status" value="1"/>
</dbReference>
<dbReference type="Pfam" id="PF08443">
    <property type="entry name" value="RimK"/>
    <property type="match status" value="1"/>
</dbReference>
<dbReference type="Pfam" id="PF18030">
    <property type="entry name" value="Rimk_N"/>
    <property type="match status" value="1"/>
</dbReference>
<dbReference type="SUPFAM" id="SSF56059">
    <property type="entry name" value="Glutathione synthetase ATP-binding domain-like"/>
    <property type="match status" value="1"/>
</dbReference>
<dbReference type="PROSITE" id="PS50975">
    <property type="entry name" value="ATP_GRASP"/>
    <property type="match status" value="1"/>
</dbReference>
<keyword id="KW-0067">ATP-binding</keyword>
<keyword id="KW-0436">Ligase</keyword>
<keyword id="KW-0460">Magnesium</keyword>
<keyword id="KW-0464">Manganese</keyword>
<keyword id="KW-0479">Metal-binding</keyword>
<keyword id="KW-0547">Nucleotide-binding</keyword>
<keyword id="KW-0648">Protein biosynthesis</keyword>
<sequence length="301" mass="32679">MKIAVLSRNPRLYSTRRLVEAGIERGHEMVVIDTLRAYMNIASHKPQIHYRGKPLEGFDAVIPRIGASVTFYGCAVLRQFEMMGVFPLNESVAIARSRDKLRSLQLLSRRGIGLPVTGFAHSPDDIPDLIQMVNGAPLVIKVLEGTQGIGVVLCETATAAESVIEAFMGLKQDIMVQEYIKEAGGADIRCFVVGDKVIASMKRQAKPGEFRSNLHRGGSASLIKITPEERMTALRAAKVMGLSVAGVDILRSNHGPLVMEVNSSPGLEGIEVTTSKDVAGMIIEYLEKNSGPHMTRTKGKG</sequence>
<accession>Q48BZ2</accession>
<feature type="chain" id="PRO_0000205474" description="Probable alpha-L-glutamate ligase">
    <location>
        <begin position="1"/>
        <end position="301"/>
    </location>
</feature>
<feature type="domain" description="ATP-grasp" evidence="1">
    <location>
        <begin position="104"/>
        <end position="287"/>
    </location>
</feature>
<feature type="binding site" evidence="1">
    <location>
        <position position="141"/>
    </location>
    <ligand>
        <name>ATP</name>
        <dbReference type="ChEBI" id="CHEBI:30616"/>
    </ligand>
</feature>
<feature type="binding site" evidence="1">
    <location>
        <begin position="178"/>
        <end position="179"/>
    </location>
    <ligand>
        <name>ATP</name>
        <dbReference type="ChEBI" id="CHEBI:30616"/>
    </ligand>
</feature>
<feature type="binding site" evidence="1">
    <location>
        <position position="187"/>
    </location>
    <ligand>
        <name>ATP</name>
        <dbReference type="ChEBI" id="CHEBI:30616"/>
    </ligand>
</feature>
<feature type="binding site" evidence="1">
    <location>
        <begin position="211"/>
        <end position="213"/>
    </location>
    <ligand>
        <name>ATP</name>
        <dbReference type="ChEBI" id="CHEBI:30616"/>
    </ligand>
</feature>
<feature type="binding site" evidence="1">
    <location>
        <position position="248"/>
    </location>
    <ligand>
        <name>Mg(2+)</name>
        <dbReference type="ChEBI" id="CHEBI:18420"/>
        <label>1</label>
    </ligand>
</feature>
<feature type="binding site" evidence="1">
    <location>
        <position position="248"/>
    </location>
    <ligand>
        <name>Mn(2+)</name>
        <dbReference type="ChEBI" id="CHEBI:29035"/>
        <label>1</label>
    </ligand>
</feature>
<feature type="binding site" evidence="1">
    <location>
        <position position="260"/>
    </location>
    <ligand>
        <name>Mg(2+)</name>
        <dbReference type="ChEBI" id="CHEBI:18420"/>
        <label>1</label>
    </ligand>
</feature>
<feature type="binding site" evidence="1">
    <location>
        <position position="260"/>
    </location>
    <ligand>
        <name>Mg(2+)</name>
        <dbReference type="ChEBI" id="CHEBI:18420"/>
        <label>2</label>
    </ligand>
</feature>
<feature type="binding site" evidence="1">
    <location>
        <position position="260"/>
    </location>
    <ligand>
        <name>Mn(2+)</name>
        <dbReference type="ChEBI" id="CHEBI:29035"/>
        <label>1</label>
    </ligand>
</feature>
<feature type="binding site" evidence="1">
    <location>
        <position position="260"/>
    </location>
    <ligand>
        <name>Mn(2+)</name>
        <dbReference type="ChEBI" id="CHEBI:29035"/>
        <label>2</label>
    </ligand>
</feature>
<feature type="binding site" evidence="1">
    <location>
        <position position="262"/>
    </location>
    <ligand>
        <name>Mg(2+)</name>
        <dbReference type="ChEBI" id="CHEBI:18420"/>
        <label>2</label>
    </ligand>
</feature>
<feature type="binding site" evidence="1">
    <location>
        <position position="262"/>
    </location>
    <ligand>
        <name>Mn(2+)</name>
        <dbReference type="ChEBI" id="CHEBI:29035"/>
        <label>2</label>
    </ligand>
</feature>